<protein>
    <recommendedName>
        <fullName evidence="1">Phosphoribosylaminoimidazole-succinocarboxamide synthase</fullName>
        <ecNumber evidence="1">6.3.2.6</ecNumber>
    </recommendedName>
    <alternativeName>
        <fullName evidence="1">SAICAR synthetase</fullName>
    </alternativeName>
</protein>
<name>PUR7_ANOFW</name>
<reference key="1">
    <citation type="journal article" date="2008" name="Genome Biol.">
        <title>Encapsulated in silica: genome, proteome and physiology of the thermophilic bacterium Anoxybacillus flavithermus WK1.</title>
        <authorList>
            <person name="Saw J.H."/>
            <person name="Mountain B.W."/>
            <person name="Feng L."/>
            <person name="Omelchenko M.V."/>
            <person name="Hou S."/>
            <person name="Saito J.A."/>
            <person name="Stott M.B."/>
            <person name="Li D."/>
            <person name="Zhao G."/>
            <person name="Wu J."/>
            <person name="Galperin M.Y."/>
            <person name="Koonin E.V."/>
            <person name="Makarova K.S."/>
            <person name="Wolf Y.I."/>
            <person name="Rigden D.J."/>
            <person name="Dunfield P.F."/>
            <person name="Wang L."/>
            <person name="Alam M."/>
        </authorList>
    </citation>
    <scope>NUCLEOTIDE SEQUENCE [LARGE SCALE GENOMIC DNA]</scope>
    <source>
        <strain>DSM 21510 / WK1</strain>
    </source>
</reference>
<sequence>MEKQYLLYEGKAKKVYATNEKHVLWIEYKDEATAFNGEKKATIVGKGRLNNEITSLLFSLLHEAGVSNHFIRKISDTEQLVRQVTIIPLEVVVRNIVAGSLAKRIGLEEGTVMKKPIVEFYYKNDDLGDPLLTEDHIALLQLATHDELLYMKQMALRINDILTSLFRSCDLQLVDFKLEFGKDETGAVLLADEISPDTCRLWDVHTKEKFDKDVFRRDLGDLTETYTKLLQRLGGLSCTK</sequence>
<dbReference type="EC" id="6.3.2.6" evidence="1"/>
<dbReference type="EMBL" id="CP000922">
    <property type="protein sequence ID" value="ACJ32615.1"/>
    <property type="molecule type" value="Genomic_DNA"/>
</dbReference>
<dbReference type="RefSeq" id="WP_012573955.1">
    <property type="nucleotide sequence ID" value="NC_011567.1"/>
</dbReference>
<dbReference type="SMR" id="B7GFT5"/>
<dbReference type="STRING" id="491915.Aflv_0231"/>
<dbReference type="GeneID" id="7036463"/>
<dbReference type="KEGG" id="afl:Aflv_0231"/>
<dbReference type="PATRIC" id="fig|491915.6.peg.237"/>
<dbReference type="eggNOG" id="COG0152">
    <property type="taxonomic scope" value="Bacteria"/>
</dbReference>
<dbReference type="HOGENOM" id="CLU_061495_2_0_9"/>
<dbReference type="UniPathway" id="UPA00074">
    <property type="reaction ID" value="UER00131"/>
</dbReference>
<dbReference type="Proteomes" id="UP000000742">
    <property type="component" value="Chromosome"/>
</dbReference>
<dbReference type="GO" id="GO:0005524">
    <property type="term" value="F:ATP binding"/>
    <property type="evidence" value="ECO:0007669"/>
    <property type="project" value="UniProtKB-KW"/>
</dbReference>
<dbReference type="GO" id="GO:0004639">
    <property type="term" value="F:phosphoribosylaminoimidazolesuccinocarboxamide synthase activity"/>
    <property type="evidence" value="ECO:0007669"/>
    <property type="project" value="UniProtKB-UniRule"/>
</dbReference>
<dbReference type="GO" id="GO:0006189">
    <property type="term" value="P:'de novo' IMP biosynthetic process"/>
    <property type="evidence" value="ECO:0007669"/>
    <property type="project" value="UniProtKB-UniRule"/>
</dbReference>
<dbReference type="GO" id="GO:0009236">
    <property type="term" value="P:cobalamin biosynthetic process"/>
    <property type="evidence" value="ECO:0007669"/>
    <property type="project" value="InterPro"/>
</dbReference>
<dbReference type="CDD" id="cd01415">
    <property type="entry name" value="SAICAR_synt_PurC"/>
    <property type="match status" value="1"/>
</dbReference>
<dbReference type="FunFam" id="3.30.200.20:FF:000189">
    <property type="entry name" value="Phosphoribosylaminoimidazole-succinocarboxamide synthase"/>
    <property type="match status" value="1"/>
</dbReference>
<dbReference type="FunFam" id="3.30.470.20:FF:000006">
    <property type="entry name" value="Phosphoribosylaminoimidazole-succinocarboxamide synthase"/>
    <property type="match status" value="1"/>
</dbReference>
<dbReference type="Gene3D" id="3.30.470.20">
    <property type="entry name" value="ATP-grasp fold, B domain"/>
    <property type="match status" value="1"/>
</dbReference>
<dbReference type="Gene3D" id="3.30.200.20">
    <property type="entry name" value="Phosphorylase Kinase, domain 1"/>
    <property type="match status" value="1"/>
</dbReference>
<dbReference type="HAMAP" id="MF_00137">
    <property type="entry name" value="SAICAR_synth"/>
    <property type="match status" value="1"/>
</dbReference>
<dbReference type="InterPro" id="IPR028923">
    <property type="entry name" value="SAICAR_synt/ADE2_N"/>
</dbReference>
<dbReference type="InterPro" id="IPR033934">
    <property type="entry name" value="SAICAR_synt_PurC"/>
</dbReference>
<dbReference type="InterPro" id="IPR001636">
    <property type="entry name" value="SAICAR_synth"/>
</dbReference>
<dbReference type="InterPro" id="IPR050089">
    <property type="entry name" value="SAICAR_synthetase"/>
</dbReference>
<dbReference type="InterPro" id="IPR018236">
    <property type="entry name" value="SAICAR_synthetase_CS"/>
</dbReference>
<dbReference type="NCBIfam" id="TIGR00081">
    <property type="entry name" value="purC"/>
    <property type="match status" value="1"/>
</dbReference>
<dbReference type="PANTHER" id="PTHR43599">
    <property type="entry name" value="MULTIFUNCTIONAL PROTEIN ADE2"/>
    <property type="match status" value="1"/>
</dbReference>
<dbReference type="PANTHER" id="PTHR43599:SF3">
    <property type="entry name" value="SI:DKEY-6E2.2"/>
    <property type="match status" value="1"/>
</dbReference>
<dbReference type="Pfam" id="PF01259">
    <property type="entry name" value="SAICAR_synt"/>
    <property type="match status" value="1"/>
</dbReference>
<dbReference type="SUPFAM" id="SSF56104">
    <property type="entry name" value="SAICAR synthase-like"/>
    <property type="match status" value="1"/>
</dbReference>
<dbReference type="PROSITE" id="PS01057">
    <property type="entry name" value="SAICAR_SYNTHETASE_1"/>
    <property type="match status" value="1"/>
</dbReference>
<dbReference type="PROSITE" id="PS01058">
    <property type="entry name" value="SAICAR_SYNTHETASE_2"/>
    <property type="match status" value="1"/>
</dbReference>
<gene>
    <name evidence="1" type="primary">purC</name>
    <name type="ordered locus">Aflv_0231</name>
</gene>
<feature type="chain" id="PRO_1000117823" description="Phosphoribosylaminoimidazole-succinocarboxamide synthase">
    <location>
        <begin position="1"/>
        <end position="240"/>
    </location>
</feature>
<comment type="catalytic activity">
    <reaction evidence="1">
        <text>5-amino-1-(5-phospho-D-ribosyl)imidazole-4-carboxylate + L-aspartate + ATP = (2S)-2-[5-amino-1-(5-phospho-beta-D-ribosyl)imidazole-4-carboxamido]succinate + ADP + phosphate + 2 H(+)</text>
        <dbReference type="Rhea" id="RHEA:22628"/>
        <dbReference type="ChEBI" id="CHEBI:15378"/>
        <dbReference type="ChEBI" id="CHEBI:29991"/>
        <dbReference type="ChEBI" id="CHEBI:30616"/>
        <dbReference type="ChEBI" id="CHEBI:43474"/>
        <dbReference type="ChEBI" id="CHEBI:58443"/>
        <dbReference type="ChEBI" id="CHEBI:77657"/>
        <dbReference type="ChEBI" id="CHEBI:456216"/>
        <dbReference type="EC" id="6.3.2.6"/>
    </reaction>
</comment>
<comment type="pathway">
    <text evidence="1">Purine metabolism; IMP biosynthesis via de novo pathway; 5-amino-1-(5-phospho-D-ribosyl)imidazole-4-carboxamide from 5-amino-1-(5-phospho-D-ribosyl)imidazole-4-carboxylate: step 1/2.</text>
</comment>
<comment type="similarity">
    <text evidence="1">Belongs to the SAICAR synthetase family.</text>
</comment>
<proteinExistence type="inferred from homology"/>
<accession>B7GFT5</accession>
<evidence type="ECO:0000255" key="1">
    <source>
        <dbReference type="HAMAP-Rule" id="MF_00137"/>
    </source>
</evidence>
<keyword id="KW-0067">ATP-binding</keyword>
<keyword id="KW-0436">Ligase</keyword>
<keyword id="KW-0547">Nucleotide-binding</keyword>
<keyword id="KW-0658">Purine biosynthesis</keyword>
<organism>
    <name type="scientific">Anoxybacillus flavithermus (strain DSM 21510 / WK1)</name>
    <dbReference type="NCBI Taxonomy" id="491915"/>
    <lineage>
        <taxon>Bacteria</taxon>
        <taxon>Bacillati</taxon>
        <taxon>Bacillota</taxon>
        <taxon>Bacilli</taxon>
        <taxon>Bacillales</taxon>
        <taxon>Anoxybacillaceae</taxon>
        <taxon>Anoxybacillus</taxon>
    </lineage>
</organism>